<proteinExistence type="inferred from homology"/>
<dbReference type="EMBL" id="CP000993">
    <property type="protein sequence ID" value="ACH94920.1"/>
    <property type="molecule type" value="Genomic_DNA"/>
</dbReference>
<dbReference type="RefSeq" id="WP_012538435.1">
    <property type="nucleotide sequence ID" value="NZ_CP169983.1"/>
</dbReference>
<dbReference type="SMR" id="B5RQ36"/>
<dbReference type="KEGG" id="bre:BRE_701"/>
<dbReference type="HOGENOM" id="CLU_100590_5_0_12"/>
<dbReference type="Proteomes" id="UP000000612">
    <property type="component" value="Chromosome"/>
</dbReference>
<dbReference type="GO" id="GO:0005737">
    <property type="term" value="C:cytoplasm"/>
    <property type="evidence" value="ECO:0007669"/>
    <property type="project" value="UniProtKB-ARBA"/>
</dbReference>
<dbReference type="GO" id="GO:0015935">
    <property type="term" value="C:small ribosomal subunit"/>
    <property type="evidence" value="ECO:0007669"/>
    <property type="project" value="TreeGrafter"/>
</dbReference>
<dbReference type="GO" id="GO:0003735">
    <property type="term" value="F:structural constituent of ribosome"/>
    <property type="evidence" value="ECO:0007669"/>
    <property type="project" value="InterPro"/>
</dbReference>
<dbReference type="GO" id="GO:0006412">
    <property type="term" value="P:translation"/>
    <property type="evidence" value="ECO:0007669"/>
    <property type="project" value="UniProtKB-UniRule"/>
</dbReference>
<dbReference type="Gene3D" id="3.30.1320.10">
    <property type="match status" value="1"/>
</dbReference>
<dbReference type="HAMAP" id="MF_00385">
    <property type="entry name" value="Ribosomal_bS16"/>
    <property type="match status" value="1"/>
</dbReference>
<dbReference type="InterPro" id="IPR000307">
    <property type="entry name" value="Ribosomal_bS16"/>
</dbReference>
<dbReference type="InterPro" id="IPR020592">
    <property type="entry name" value="Ribosomal_bS16_CS"/>
</dbReference>
<dbReference type="InterPro" id="IPR023803">
    <property type="entry name" value="Ribosomal_bS16_dom_sf"/>
</dbReference>
<dbReference type="NCBIfam" id="TIGR00002">
    <property type="entry name" value="S16"/>
    <property type="match status" value="1"/>
</dbReference>
<dbReference type="PANTHER" id="PTHR12919">
    <property type="entry name" value="30S RIBOSOMAL PROTEIN S16"/>
    <property type="match status" value="1"/>
</dbReference>
<dbReference type="PANTHER" id="PTHR12919:SF20">
    <property type="entry name" value="SMALL RIBOSOMAL SUBUNIT PROTEIN BS16M"/>
    <property type="match status" value="1"/>
</dbReference>
<dbReference type="Pfam" id="PF00886">
    <property type="entry name" value="Ribosomal_S16"/>
    <property type="match status" value="1"/>
</dbReference>
<dbReference type="SUPFAM" id="SSF54565">
    <property type="entry name" value="Ribosomal protein S16"/>
    <property type="match status" value="1"/>
</dbReference>
<dbReference type="PROSITE" id="PS00732">
    <property type="entry name" value="RIBOSOMAL_S16"/>
    <property type="match status" value="1"/>
</dbReference>
<name>RS16_BORRA</name>
<keyword id="KW-0687">Ribonucleoprotein</keyword>
<keyword id="KW-0689">Ribosomal protein</keyword>
<feature type="chain" id="PRO_1000196345" description="Small ribosomal subunit protein bS16">
    <location>
        <begin position="1"/>
        <end position="83"/>
    </location>
</feature>
<protein>
    <recommendedName>
        <fullName evidence="1">Small ribosomal subunit protein bS16</fullName>
    </recommendedName>
    <alternativeName>
        <fullName evidence="2">30S ribosomal protein S16</fullName>
    </alternativeName>
</protein>
<sequence>MSVRIRLKRMGAKKRPYYRIVVMDSSSPRDGRAIEELGYYHPVERQNQVKINKNKFQEWVDKGAIPSDTVKRILNKSNFKVDN</sequence>
<accession>B5RQ36</accession>
<evidence type="ECO:0000255" key="1">
    <source>
        <dbReference type="HAMAP-Rule" id="MF_00385"/>
    </source>
</evidence>
<evidence type="ECO:0000305" key="2"/>
<comment type="similarity">
    <text evidence="1">Belongs to the bacterial ribosomal protein bS16 family.</text>
</comment>
<gene>
    <name evidence="1" type="primary">rpsP</name>
    <name type="ordered locus">BRE_701</name>
</gene>
<organism>
    <name type="scientific">Borrelia recurrentis (strain A1)</name>
    <dbReference type="NCBI Taxonomy" id="412418"/>
    <lineage>
        <taxon>Bacteria</taxon>
        <taxon>Pseudomonadati</taxon>
        <taxon>Spirochaetota</taxon>
        <taxon>Spirochaetia</taxon>
        <taxon>Spirochaetales</taxon>
        <taxon>Borreliaceae</taxon>
        <taxon>Borrelia</taxon>
    </lineage>
</organism>
<reference key="1">
    <citation type="journal article" date="2008" name="PLoS Genet.">
        <title>The genome of Borrelia recurrentis, the agent of deadly louse-borne relapsing fever, is a degraded subset of tick-borne Borrelia duttonii.</title>
        <authorList>
            <person name="Lescot M."/>
            <person name="Audic S."/>
            <person name="Robert C."/>
            <person name="Nguyen T.T."/>
            <person name="Blanc G."/>
            <person name="Cutler S.J."/>
            <person name="Wincker P."/>
            <person name="Couloux A."/>
            <person name="Claverie J.-M."/>
            <person name="Raoult D."/>
            <person name="Drancourt M."/>
        </authorList>
    </citation>
    <scope>NUCLEOTIDE SEQUENCE [LARGE SCALE GENOMIC DNA]</scope>
    <source>
        <strain>A1</strain>
    </source>
</reference>